<sequence>MAIPANFLRACHVCPLKKPAGCCKEQTMNIVDQQTFRDAMSCMGAAVNIITTDGPAGRAGFTASAVCSVTDTPPTLLVCLNRGASVWPVFNENRTLCVNTLSAGQEPLSNLFGGKTPMELRFAAARWQTGVTGCPQLEEALVSFDCRISQVVSVGTHDILFCAIEAIHRHATPYGLVWFDRSYHALMRPAC</sequence>
<keyword id="KW-0285">Flavoprotein</keyword>
<keyword id="KW-0288">FMN</keyword>
<keyword id="KW-0520">NAD</keyword>
<keyword id="KW-0560">Oxidoreductase</keyword>
<keyword id="KW-1185">Reference proteome</keyword>
<gene>
    <name evidence="1" type="primary">rutF</name>
    <name type="ordered locus">Ecok1_09080</name>
    <name type="ORF">APECO1_98</name>
</gene>
<protein>
    <recommendedName>
        <fullName evidence="1">FMN reductase (NADH) RutF</fullName>
        <ecNumber evidence="1">1.5.1.42</ecNumber>
    </recommendedName>
    <alternativeName>
        <fullName evidence="1">FMN reductase</fullName>
    </alternativeName>
    <alternativeName>
        <fullName evidence="1">NADH-flavin reductase RutF</fullName>
    </alternativeName>
    <alternativeName>
        <fullName evidence="1">NADH:flavin oxidoreductase</fullName>
    </alternativeName>
</protein>
<name>RUTF_ECOK1</name>
<evidence type="ECO:0000255" key="1">
    <source>
        <dbReference type="HAMAP-Rule" id="MF_00833"/>
    </source>
</evidence>
<feature type="chain" id="PRO_0000403017" description="FMN reductase (NADH) RutF">
    <location>
        <begin position="1"/>
        <end position="191"/>
    </location>
</feature>
<proteinExistence type="inferred from homology"/>
<comment type="function">
    <text evidence="1">Catalyzes the reduction of FMN to FMNH2 which is used to reduce pyrimidine by RutA via the Rut pathway.</text>
</comment>
<comment type="catalytic activity">
    <reaction evidence="1">
        <text>FMNH2 + NAD(+) = FMN + NADH + 2 H(+)</text>
        <dbReference type="Rhea" id="RHEA:21620"/>
        <dbReference type="ChEBI" id="CHEBI:15378"/>
        <dbReference type="ChEBI" id="CHEBI:57540"/>
        <dbReference type="ChEBI" id="CHEBI:57618"/>
        <dbReference type="ChEBI" id="CHEBI:57945"/>
        <dbReference type="ChEBI" id="CHEBI:58210"/>
        <dbReference type="EC" id="1.5.1.42"/>
    </reaction>
</comment>
<comment type="induction">
    <text evidence="1">Up-regulated by the nitrogen regulatory protein C (NtrC also called GlnG) and repressed by RutR.</text>
</comment>
<comment type="similarity">
    <text evidence="1">Belongs to the non-flavoprotein flavin reductase family. RutF subfamily.</text>
</comment>
<reference key="1">
    <citation type="journal article" date="2007" name="J. Bacteriol.">
        <title>The genome sequence of avian pathogenic Escherichia coli strain O1:K1:H7 shares strong similarities with human extraintestinal pathogenic E. coli genomes.</title>
        <authorList>
            <person name="Johnson T.J."/>
            <person name="Kariyawasam S."/>
            <person name="Wannemuehler Y."/>
            <person name="Mangiamele P."/>
            <person name="Johnson S.J."/>
            <person name="Doetkott C."/>
            <person name="Skyberg J.A."/>
            <person name="Lynne A.M."/>
            <person name="Johnson J.R."/>
            <person name="Nolan L.K."/>
        </authorList>
    </citation>
    <scope>NUCLEOTIDE SEQUENCE [LARGE SCALE GENOMIC DNA]</scope>
</reference>
<organism>
    <name type="scientific">Escherichia coli O1:K1 / APEC</name>
    <dbReference type="NCBI Taxonomy" id="405955"/>
    <lineage>
        <taxon>Bacteria</taxon>
        <taxon>Pseudomonadati</taxon>
        <taxon>Pseudomonadota</taxon>
        <taxon>Gammaproteobacteria</taxon>
        <taxon>Enterobacterales</taxon>
        <taxon>Enterobacteriaceae</taxon>
        <taxon>Escherichia</taxon>
    </lineage>
</organism>
<accession>A1A9R2</accession>
<dbReference type="EC" id="1.5.1.42" evidence="1"/>
<dbReference type="EMBL" id="CP000468">
    <property type="protein sequence ID" value="ABJ00402.1"/>
    <property type="molecule type" value="Genomic_DNA"/>
</dbReference>
<dbReference type="SMR" id="A1A9R2"/>
<dbReference type="KEGG" id="ecv:APECO1_98"/>
<dbReference type="HOGENOM" id="CLU_059021_2_2_6"/>
<dbReference type="Proteomes" id="UP000008216">
    <property type="component" value="Chromosome"/>
</dbReference>
<dbReference type="GO" id="GO:0010181">
    <property type="term" value="F:FMN binding"/>
    <property type="evidence" value="ECO:0007669"/>
    <property type="project" value="InterPro"/>
</dbReference>
<dbReference type="GO" id="GO:0052874">
    <property type="term" value="F:FMN reductase (NADH) activity"/>
    <property type="evidence" value="ECO:0007669"/>
    <property type="project" value="UniProtKB-EC"/>
</dbReference>
<dbReference type="GO" id="GO:0008752">
    <property type="term" value="F:FMN reductase [NAD(P)H] activity"/>
    <property type="evidence" value="ECO:0007669"/>
    <property type="project" value="InterPro"/>
</dbReference>
<dbReference type="GO" id="GO:0042602">
    <property type="term" value="F:riboflavin reductase (NADPH) activity"/>
    <property type="evidence" value="ECO:0007669"/>
    <property type="project" value="UniProtKB-UniRule"/>
</dbReference>
<dbReference type="GO" id="GO:0019740">
    <property type="term" value="P:nitrogen utilization"/>
    <property type="evidence" value="ECO:0007669"/>
    <property type="project" value="UniProtKB-UniRule"/>
</dbReference>
<dbReference type="GO" id="GO:0006212">
    <property type="term" value="P:uracil catabolic process"/>
    <property type="evidence" value="ECO:0007669"/>
    <property type="project" value="UniProtKB-UniRule"/>
</dbReference>
<dbReference type="FunFam" id="2.30.110.10:FF:000002">
    <property type="entry name" value="FMN reductase (NADH) RutF"/>
    <property type="match status" value="1"/>
</dbReference>
<dbReference type="Gene3D" id="2.30.110.10">
    <property type="entry name" value="Electron Transport, Fmn-binding Protein, Chain A"/>
    <property type="match status" value="1"/>
</dbReference>
<dbReference type="HAMAP" id="MF_00833">
    <property type="entry name" value="RutF"/>
    <property type="match status" value="1"/>
</dbReference>
<dbReference type="InterPro" id="IPR002563">
    <property type="entry name" value="Flavin_Rdtase-like_dom"/>
</dbReference>
<dbReference type="InterPro" id="IPR050268">
    <property type="entry name" value="NADH-dep_flavin_reductase"/>
</dbReference>
<dbReference type="InterPro" id="IPR019917">
    <property type="entry name" value="RutF"/>
</dbReference>
<dbReference type="InterPro" id="IPR012349">
    <property type="entry name" value="Split_barrel_FMN-bd"/>
</dbReference>
<dbReference type="NCBIfam" id="TIGR03615">
    <property type="entry name" value="RutF"/>
    <property type="match status" value="1"/>
</dbReference>
<dbReference type="PANTHER" id="PTHR30466">
    <property type="entry name" value="FLAVIN REDUCTASE"/>
    <property type="match status" value="1"/>
</dbReference>
<dbReference type="PANTHER" id="PTHR30466:SF1">
    <property type="entry name" value="FMN REDUCTASE (NADH) RUTF"/>
    <property type="match status" value="1"/>
</dbReference>
<dbReference type="Pfam" id="PF01613">
    <property type="entry name" value="Flavin_Reduct"/>
    <property type="match status" value="1"/>
</dbReference>
<dbReference type="SMART" id="SM00903">
    <property type="entry name" value="Flavin_Reduct"/>
    <property type="match status" value="1"/>
</dbReference>
<dbReference type="SUPFAM" id="SSF50475">
    <property type="entry name" value="FMN-binding split barrel"/>
    <property type="match status" value="1"/>
</dbReference>